<feature type="chain" id="PRO_0000064452" description="Transcription factor Adf-1">
    <location>
        <begin position="1"/>
        <end position="262"/>
    </location>
</feature>
<feature type="domain" description="BESS" evidence="1">
    <location>
        <begin position="217"/>
        <end position="256"/>
    </location>
</feature>
<feature type="DNA-binding region" description="MADF" evidence="2">
    <location>
        <begin position="24"/>
        <end position="104"/>
    </location>
</feature>
<feature type="splice variant" id="VSP_021568" description="In isoform A." evidence="5 6">
    <location>
        <begin position="1"/>
        <end position="9"/>
    </location>
</feature>
<organism>
    <name type="scientific">Drosophila melanogaster</name>
    <name type="common">Fruit fly</name>
    <dbReference type="NCBI Taxonomy" id="7227"/>
    <lineage>
        <taxon>Eukaryota</taxon>
        <taxon>Metazoa</taxon>
        <taxon>Ecdysozoa</taxon>
        <taxon>Arthropoda</taxon>
        <taxon>Hexapoda</taxon>
        <taxon>Insecta</taxon>
        <taxon>Pterygota</taxon>
        <taxon>Neoptera</taxon>
        <taxon>Endopterygota</taxon>
        <taxon>Diptera</taxon>
        <taxon>Brachycera</taxon>
        <taxon>Muscomorpha</taxon>
        <taxon>Ephydroidea</taxon>
        <taxon>Drosophilidae</taxon>
        <taxon>Drosophila</taxon>
        <taxon>Sophophora</taxon>
    </lineage>
</organism>
<gene>
    <name type="primary">Adf1</name>
    <name type="ORF">CG15845</name>
</gene>
<keyword id="KW-0025">Alternative splicing</keyword>
<keyword id="KW-0238">DNA-binding</keyword>
<keyword id="KW-0539">Nucleus</keyword>
<keyword id="KW-1185">Reference proteome</keyword>
<keyword id="KW-0804">Transcription</keyword>
<keyword id="KW-0805">Transcription regulation</keyword>
<reference key="1">
    <citation type="journal article" date="1992" name="Proc. Natl. Acad. Sci. U.S.A.">
        <title>Cloning of Drosophila transcription factor Adf-1 reveals homology to Myb oncoproteins.</title>
        <authorList>
            <person name="England B.P."/>
            <person name="Admon A."/>
            <person name="Tjian R."/>
        </authorList>
    </citation>
    <scope>NUCLEOTIDE SEQUENCE [MRNA] (ISOFORM A)</scope>
    <scope>FUNCTION</scope>
    <scope>SUBCELLULAR LOCATION</scope>
    <scope>DEVELOPMENTAL STAGE</scope>
    <source>
        <strain>Oregon-R</strain>
        <tissue>Embryo</tissue>
    </source>
</reference>
<reference key="2">
    <citation type="journal article" date="2000" name="Science">
        <title>The genome sequence of Drosophila melanogaster.</title>
        <authorList>
            <person name="Adams M.D."/>
            <person name="Celniker S.E."/>
            <person name="Holt R.A."/>
            <person name="Evans C.A."/>
            <person name="Gocayne J.D."/>
            <person name="Amanatides P.G."/>
            <person name="Scherer S.E."/>
            <person name="Li P.W."/>
            <person name="Hoskins R.A."/>
            <person name="Galle R.F."/>
            <person name="George R.A."/>
            <person name="Lewis S.E."/>
            <person name="Richards S."/>
            <person name="Ashburner M."/>
            <person name="Henderson S.N."/>
            <person name="Sutton G.G."/>
            <person name="Wortman J.R."/>
            <person name="Yandell M.D."/>
            <person name="Zhang Q."/>
            <person name="Chen L.X."/>
            <person name="Brandon R.C."/>
            <person name="Rogers Y.-H.C."/>
            <person name="Blazej R.G."/>
            <person name="Champe M."/>
            <person name="Pfeiffer B.D."/>
            <person name="Wan K.H."/>
            <person name="Doyle C."/>
            <person name="Baxter E.G."/>
            <person name="Helt G."/>
            <person name="Nelson C.R."/>
            <person name="Miklos G.L.G."/>
            <person name="Abril J.F."/>
            <person name="Agbayani A."/>
            <person name="An H.-J."/>
            <person name="Andrews-Pfannkoch C."/>
            <person name="Baldwin D."/>
            <person name="Ballew R.M."/>
            <person name="Basu A."/>
            <person name="Baxendale J."/>
            <person name="Bayraktaroglu L."/>
            <person name="Beasley E.M."/>
            <person name="Beeson K.Y."/>
            <person name="Benos P.V."/>
            <person name="Berman B.P."/>
            <person name="Bhandari D."/>
            <person name="Bolshakov S."/>
            <person name="Borkova D."/>
            <person name="Botchan M.R."/>
            <person name="Bouck J."/>
            <person name="Brokstein P."/>
            <person name="Brottier P."/>
            <person name="Burtis K.C."/>
            <person name="Busam D.A."/>
            <person name="Butler H."/>
            <person name="Cadieu E."/>
            <person name="Center A."/>
            <person name="Chandra I."/>
            <person name="Cherry J.M."/>
            <person name="Cawley S."/>
            <person name="Dahlke C."/>
            <person name="Davenport L.B."/>
            <person name="Davies P."/>
            <person name="de Pablos B."/>
            <person name="Delcher A."/>
            <person name="Deng Z."/>
            <person name="Mays A.D."/>
            <person name="Dew I."/>
            <person name="Dietz S.M."/>
            <person name="Dodson K."/>
            <person name="Doup L.E."/>
            <person name="Downes M."/>
            <person name="Dugan-Rocha S."/>
            <person name="Dunkov B.C."/>
            <person name="Dunn P."/>
            <person name="Durbin K.J."/>
            <person name="Evangelista C.C."/>
            <person name="Ferraz C."/>
            <person name="Ferriera S."/>
            <person name="Fleischmann W."/>
            <person name="Fosler C."/>
            <person name="Gabrielian A.E."/>
            <person name="Garg N.S."/>
            <person name="Gelbart W.M."/>
            <person name="Glasser K."/>
            <person name="Glodek A."/>
            <person name="Gong F."/>
            <person name="Gorrell J.H."/>
            <person name="Gu Z."/>
            <person name="Guan P."/>
            <person name="Harris M."/>
            <person name="Harris N.L."/>
            <person name="Harvey D.A."/>
            <person name="Heiman T.J."/>
            <person name="Hernandez J.R."/>
            <person name="Houck J."/>
            <person name="Hostin D."/>
            <person name="Houston K.A."/>
            <person name="Howland T.J."/>
            <person name="Wei M.-H."/>
            <person name="Ibegwam C."/>
            <person name="Jalali M."/>
            <person name="Kalush F."/>
            <person name="Karpen G.H."/>
            <person name="Ke Z."/>
            <person name="Kennison J.A."/>
            <person name="Ketchum K.A."/>
            <person name="Kimmel B.E."/>
            <person name="Kodira C.D."/>
            <person name="Kraft C.L."/>
            <person name="Kravitz S."/>
            <person name="Kulp D."/>
            <person name="Lai Z."/>
            <person name="Lasko P."/>
            <person name="Lei Y."/>
            <person name="Levitsky A.A."/>
            <person name="Li J.H."/>
            <person name="Li Z."/>
            <person name="Liang Y."/>
            <person name="Lin X."/>
            <person name="Liu X."/>
            <person name="Mattei B."/>
            <person name="McIntosh T.C."/>
            <person name="McLeod M.P."/>
            <person name="McPherson D."/>
            <person name="Merkulov G."/>
            <person name="Milshina N.V."/>
            <person name="Mobarry C."/>
            <person name="Morris J."/>
            <person name="Moshrefi A."/>
            <person name="Mount S.M."/>
            <person name="Moy M."/>
            <person name="Murphy B."/>
            <person name="Murphy L."/>
            <person name="Muzny D.M."/>
            <person name="Nelson D.L."/>
            <person name="Nelson D.R."/>
            <person name="Nelson K.A."/>
            <person name="Nixon K."/>
            <person name="Nusskern D.R."/>
            <person name="Pacleb J.M."/>
            <person name="Palazzolo M."/>
            <person name="Pittman G.S."/>
            <person name="Pan S."/>
            <person name="Pollard J."/>
            <person name="Puri V."/>
            <person name="Reese M.G."/>
            <person name="Reinert K."/>
            <person name="Remington K."/>
            <person name="Saunders R.D.C."/>
            <person name="Scheeler F."/>
            <person name="Shen H."/>
            <person name="Shue B.C."/>
            <person name="Siden-Kiamos I."/>
            <person name="Simpson M."/>
            <person name="Skupski M.P."/>
            <person name="Smith T.J."/>
            <person name="Spier E."/>
            <person name="Spradling A.C."/>
            <person name="Stapleton M."/>
            <person name="Strong R."/>
            <person name="Sun E."/>
            <person name="Svirskas R."/>
            <person name="Tector C."/>
            <person name="Turner R."/>
            <person name="Venter E."/>
            <person name="Wang A.H."/>
            <person name="Wang X."/>
            <person name="Wang Z.-Y."/>
            <person name="Wassarman D.A."/>
            <person name="Weinstock G.M."/>
            <person name="Weissenbach J."/>
            <person name="Williams S.M."/>
            <person name="Woodage T."/>
            <person name="Worley K.C."/>
            <person name="Wu D."/>
            <person name="Yang S."/>
            <person name="Yao Q.A."/>
            <person name="Ye J."/>
            <person name="Yeh R.-F."/>
            <person name="Zaveri J.S."/>
            <person name="Zhan M."/>
            <person name="Zhang G."/>
            <person name="Zhao Q."/>
            <person name="Zheng L."/>
            <person name="Zheng X.H."/>
            <person name="Zhong F.N."/>
            <person name="Zhong W."/>
            <person name="Zhou X."/>
            <person name="Zhu S.C."/>
            <person name="Zhu X."/>
            <person name="Smith H.O."/>
            <person name="Gibbs R.A."/>
            <person name="Myers E.W."/>
            <person name="Rubin G.M."/>
            <person name="Venter J.C."/>
        </authorList>
    </citation>
    <scope>NUCLEOTIDE SEQUENCE [LARGE SCALE GENOMIC DNA]</scope>
    <source>
        <strain>Berkeley</strain>
    </source>
</reference>
<reference key="3">
    <citation type="journal article" date="2002" name="Genome Biol.">
        <title>Annotation of the Drosophila melanogaster euchromatic genome: a systematic review.</title>
        <authorList>
            <person name="Misra S."/>
            <person name="Crosby M.A."/>
            <person name="Mungall C.J."/>
            <person name="Matthews B.B."/>
            <person name="Campbell K.S."/>
            <person name="Hradecky P."/>
            <person name="Huang Y."/>
            <person name="Kaminker J.S."/>
            <person name="Millburn G.H."/>
            <person name="Prochnik S.E."/>
            <person name="Smith C.D."/>
            <person name="Tupy J.L."/>
            <person name="Whitfield E.J."/>
            <person name="Bayraktaroglu L."/>
            <person name="Berman B.P."/>
            <person name="Bettencourt B.R."/>
            <person name="Celniker S.E."/>
            <person name="de Grey A.D.N.J."/>
            <person name="Drysdale R.A."/>
            <person name="Harris N.L."/>
            <person name="Richter J."/>
            <person name="Russo S."/>
            <person name="Schroeder A.J."/>
            <person name="Shu S.Q."/>
            <person name="Stapleton M."/>
            <person name="Yamada C."/>
            <person name="Ashburner M."/>
            <person name="Gelbart W.M."/>
            <person name="Rubin G.M."/>
            <person name="Lewis S.E."/>
        </authorList>
    </citation>
    <scope>GENOME REANNOTATION</scope>
    <scope>ALTERNATIVE SPLICING</scope>
    <source>
        <strain>Berkeley</strain>
    </source>
</reference>
<reference key="4">
    <citation type="journal article" date="2002" name="Genome Biol.">
        <title>A Drosophila full-length cDNA resource.</title>
        <authorList>
            <person name="Stapleton M."/>
            <person name="Carlson J.W."/>
            <person name="Brokstein P."/>
            <person name="Yu C."/>
            <person name="Champe M."/>
            <person name="George R.A."/>
            <person name="Guarin H."/>
            <person name="Kronmiller B."/>
            <person name="Pacleb J.M."/>
            <person name="Park S."/>
            <person name="Wan K.H."/>
            <person name="Rubin G.M."/>
            <person name="Celniker S.E."/>
        </authorList>
    </citation>
    <scope>NUCLEOTIDE SEQUENCE [LARGE SCALE MRNA] (ISOFORM A)</scope>
    <source>
        <strain>Berkeley</strain>
        <tissue>Embryo</tissue>
    </source>
</reference>
<reference key="5">
    <citation type="journal article" date="1990" name="J. Biol. Chem.">
        <title>Purified Drosophila transcription factor, Adh distal factor-1 (Adf-1), binds to sites in several Drosophila promoters and activates transcription.</title>
        <authorList>
            <person name="England B.P."/>
            <person name="Heberlein U."/>
            <person name="Tjian R."/>
        </authorList>
    </citation>
    <scope>FUNCTION</scope>
</reference>
<comment type="function">
    <text evidence="3 4">May play an important role not only in the regulation of Adh expression but also in the transcription of other genes.</text>
</comment>
<comment type="subcellular location">
    <subcellularLocation>
        <location evidence="1 2 3">Nucleus</location>
    </subcellularLocation>
</comment>
<comment type="alternative products">
    <event type="alternative splicing"/>
    <isoform>
        <id>P05552-1</id>
        <name>C</name>
        <sequence type="displayed"/>
    </isoform>
    <isoform>
        <id>P05552-2</id>
        <name>A</name>
        <name>B</name>
        <sequence type="described" ref="VSP_021568"/>
    </isoform>
</comment>
<comment type="developmental stage">
    <text evidence="3">Expressed during later stages of embryogenesis.</text>
</comment>
<comment type="PTM">
    <text>O-glycosylated; contains N-acetylglucosamine side chains.</text>
</comment>
<dbReference type="EMBL" id="M37787">
    <property type="protein sequence ID" value="AAA28325.1"/>
    <property type="molecule type" value="mRNA"/>
</dbReference>
<dbReference type="EMBL" id="AE013599">
    <property type="protein sequence ID" value="AAF57369.1"/>
    <property type="molecule type" value="Genomic_DNA"/>
</dbReference>
<dbReference type="EMBL" id="AE013599">
    <property type="protein sequence ID" value="AAS64778.1"/>
    <property type="molecule type" value="Genomic_DNA"/>
</dbReference>
<dbReference type="EMBL" id="AY069387">
    <property type="protein sequence ID" value="AAL39532.1"/>
    <property type="molecule type" value="mRNA"/>
</dbReference>
<dbReference type="PIR" id="A38201">
    <property type="entry name" value="A38201"/>
</dbReference>
<dbReference type="RefSeq" id="NP_724481.1">
    <molecule id="P05552-2"/>
    <property type="nucleotide sequence ID" value="NM_165479.2"/>
</dbReference>
<dbReference type="RefSeq" id="NP_724482.1">
    <molecule id="P05552-2"/>
    <property type="nucleotide sequence ID" value="NM_165480.2"/>
</dbReference>
<dbReference type="RefSeq" id="NP_995750.1">
    <molecule id="P05552-1"/>
    <property type="nucleotide sequence ID" value="NM_206028.2"/>
</dbReference>
<dbReference type="SMR" id="P05552"/>
<dbReference type="BioGRID" id="70573">
    <property type="interactions" value="19"/>
</dbReference>
<dbReference type="DIP" id="DIP-21836N"/>
<dbReference type="FunCoup" id="P05552">
    <property type="interactions" value="117"/>
</dbReference>
<dbReference type="IntAct" id="P05552">
    <property type="interactions" value="10"/>
</dbReference>
<dbReference type="STRING" id="7227.FBpp0303284"/>
<dbReference type="PaxDb" id="7227-FBpp0303283"/>
<dbReference type="DNASU" id="47082"/>
<dbReference type="EnsemblMetazoa" id="FBtr0086111">
    <molecule id="P05552-2"/>
    <property type="protein sequence ID" value="FBpp0085446"/>
    <property type="gene ID" value="FBgn0284249"/>
</dbReference>
<dbReference type="EnsemblMetazoa" id="FBtr0086112">
    <molecule id="P05552-2"/>
    <property type="protein sequence ID" value="FBpp0085447"/>
    <property type="gene ID" value="FBgn0284249"/>
</dbReference>
<dbReference type="EnsemblMetazoa" id="FBtr0086113">
    <molecule id="P05552-1"/>
    <property type="protein sequence ID" value="FBpp0089262"/>
    <property type="gene ID" value="FBgn0284249"/>
</dbReference>
<dbReference type="GeneID" id="47082"/>
<dbReference type="KEGG" id="dme:Dmel_CG15845"/>
<dbReference type="AGR" id="FB:FBgn0284249"/>
<dbReference type="CTD" id="47082"/>
<dbReference type="FlyBase" id="FBgn0284249">
    <property type="gene designation" value="Adf1"/>
</dbReference>
<dbReference type="VEuPathDB" id="VectorBase:FBgn0284249"/>
<dbReference type="eggNOG" id="ENOG502SCCI">
    <property type="taxonomic scope" value="Eukaryota"/>
</dbReference>
<dbReference type="GeneTree" id="ENSGT00940000176258"/>
<dbReference type="HOGENOM" id="CLU_080630_2_0_1"/>
<dbReference type="InParanoid" id="P05552"/>
<dbReference type="OMA" id="NDNMLNT"/>
<dbReference type="OrthoDB" id="6147983at2759"/>
<dbReference type="PhylomeDB" id="P05552"/>
<dbReference type="SignaLink" id="P05552"/>
<dbReference type="ChiTaRS" id="Adf1">
    <property type="organism name" value="fly"/>
</dbReference>
<dbReference type="GenomeRNAi" id="47082"/>
<dbReference type="PRO" id="PR:P05552"/>
<dbReference type="Proteomes" id="UP000000803">
    <property type="component" value="Chromosome 2R"/>
</dbReference>
<dbReference type="Bgee" id="FBgn0284249">
    <property type="expression patterns" value="Expressed in wing disc and 157 other cell types or tissues"/>
</dbReference>
<dbReference type="ExpressionAtlas" id="P05552">
    <property type="expression patterns" value="baseline and differential"/>
</dbReference>
<dbReference type="GO" id="GO:0005634">
    <property type="term" value="C:nucleus"/>
    <property type="evidence" value="ECO:0000318"/>
    <property type="project" value="GO_Central"/>
</dbReference>
<dbReference type="GO" id="GO:0005667">
    <property type="term" value="C:transcription regulator complex"/>
    <property type="evidence" value="ECO:0000318"/>
    <property type="project" value="GO_Central"/>
</dbReference>
<dbReference type="GO" id="GO:0000981">
    <property type="term" value="F:DNA-binding transcription factor activity, RNA polymerase II-specific"/>
    <property type="evidence" value="ECO:0000314"/>
    <property type="project" value="FlyBase"/>
</dbReference>
<dbReference type="GO" id="GO:0000976">
    <property type="term" value="F:transcription cis-regulatory region binding"/>
    <property type="evidence" value="ECO:0000314"/>
    <property type="project" value="FlyBase"/>
</dbReference>
<dbReference type="GO" id="GO:0006357">
    <property type="term" value="P:regulation of transcription by RNA polymerase II"/>
    <property type="evidence" value="ECO:0000314"/>
    <property type="project" value="FlyBase"/>
</dbReference>
<dbReference type="InterPro" id="IPR004210">
    <property type="entry name" value="BESS_motif"/>
</dbReference>
<dbReference type="InterPro" id="IPR006578">
    <property type="entry name" value="MADF-dom"/>
</dbReference>
<dbReference type="InterPro" id="IPR039353">
    <property type="entry name" value="TF_Adf1"/>
</dbReference>
<dbReference type="PANTHER" id="PTHR12243:SF67">
    <property type="entry name" value="COREPRESSOR OF PANGOLIN, ISOFORM A-RELATED"/>
    <property type="match status" value="1"/>
</dbReference>
<dbReference type="PANTHER" id="PTHR12243">
    <property type="entry name" value="MADF DOMAIN TRANSCRIPTION FACTOR"/>
    <property type="match status" value="1"/>
</dbReference>
<dbReference type="Pfam" id="PF10545">
    <property type="entry name" value="MADF_DNA_bdg"/>
    <property type="match status" value="1"/>
</dbReference>
<dbReference type="SMART" id="SM00595">
    <property type="entry name" value="MADF"/>
    <property type="match status" value="1"/>
</dbReference>
<dbReference type="PROSITE" id="PS51031">
    <property type="entry name" value="BESS"/>
    <property type="match status" value="1"/>
</dbReference>
<dbReference type="PROSITE" id="PS51029">
    <property type="entry name" value="MADF"/>
    <property type="match status" value="1"/>
</dbReference>
<accession>P05552</accession>
<accession>Q0E9N5</accession>
<accession>Q9V9C4</accession>
<proteinExistence type="evidence at transcript level"/>
<evidence type="ECO:0000255" key="1">
    <source>
        <dbReference type="PROSITE-ProRule" id="PRU00371"/>
    </source>
</evidence>
<evidence type="ECO:0000255" key="2">
    <source>
        <dbReference type="PROSITE-ProRule" id="PRU00372"/>
    </source>
</evidence>
<evidence type="ECO:0000269" key="3">
    <source>
    </source>
</evidence>
<evidence type="ECO:0000269" key="4">
    <source>
    </source>
</evidence>
<evidence type="ECO:0000303" key="5">
    <source>
    </source>
</evidence>
<evidence type="ECO:0000303" key="6">
    <source>
    </source>
</evidence>
<protein>
    <recommendedName>
        <fullName>Transcription factor Adf-1</fullName>
    </recommendedName>
    <alternativeName>
        <fullName>ADH distal factor 1</fullName>
    </alternativeName>
</protein>
<sequence length="262" mass="30188">MHTLTAAIEMDKLDANLEQQFDLNLIEAVKLNPVIYDRSHYNYKHFVRKAQTWKQIAETLGVPEQKCTKRWKSLRDKFAREMKLCQESRWRYFKQMQFLVDSIRQYRESLLGKCANGSQSANQVADPSQQQQAQQQTVVDIFAQPFNGSATTSAQALTHPHEITVTSDAQLATAVGKDQKPYFYEPPLKRERSEEEHSDNMLNTIKIFQNNVSQAVSAEDQSFGMVVTDMLNTLGVRQKAEAKVHIIKYLTDMQLLAQHNKY</sequence>
<name>ADF1_DROME</name>